<accession>P16051</accession>
<accession>Q551U8</accession>
<gene>
    <name type="primary">gpaB</name>
    <name type="ORF">DDB_G0276267</name>
</gene>
<evidence type="ECO:0000250" key="1">
    <source>
        <dbReference type="UniProtKB" id="P10823"/>
    </source>
</evidence>
<evidence type="ECO:0000250" key="2">
    <source>
        <dbReference type="UniProtKB" id="P18064"/>
    </source>
</evidence>
<evidence type="ECO:0000255" key="3">
    <source>
        <dbReference type="PROSITE-ProRule" id="PRU01230"/>
    </source>
</evidence>
<evidence type="ECO:0000269" key="4">
    <source>
    </source>
</evidence>
<evidence type="ECO:0000269" key="5">
    <source>
    </source>
</evidence>
<evidence type="ECO:0000269" key="6">
    <source>
    </source>
</evidence>
<evidence type="ECO:0000269" key="7">
    <source>
    </source>
</evidence>
<evidence type="ECO:0000305" key="8"/>
<feature type="initiator methionine" description="Removed">
    <location>
        <position position="1"/>
    </location>
</feature>
<feature type="chain" id="PRO_0000203661" description="Guanine nucleotide-binding protein alpha-2 subunit">
    <location>
        <begin position="2"/>
        <end position="357"/>
    </location>
</feature>
<feature type="domain" description="G-alpha" evidence="3">
    <location>
        <begin position="30"/>
        <end position="356"/>
    </location>
</feature>
<feature type="region of interest" description="G1 motif" evidence="3">
    <location>
        <begin position="33"/>
        <end position="46"/>
    </location>
</feature>
<feature type="region of interest" description="G2 motif" evidence="3">
    <location>
        <begin position="177"/>
        <end position="185"/>
    </location>
</feature>
<feature type="region of interest" description="G3 motif" evidence="3">
    <location>
        <begin position="200"/>
        <end position="209"/>
    </location>
</feature>
<feature type="region of interest" description="G4 motif" evidence="3">
    <location>
        <begin position="268"/>
        <end position="275"/>
    </location>
</feature>
<feature type="region of interest" description="G5 motif" evidence="3">
    <location>
        <begin position="326"/>
        <end position="331"/>
    </location>
</feature>
<feature type="binding site" evidence="2">
    <location>
        <position position="41"/>
    </location>
    <ligand>
        <name>GTP</name>
        <dbReference type="ChEBI" id="CHEBI:37565"/>
    </ligand>
</feature>
<feature type="binding site" evidence="2">
    <location>
        <position position="42"/>
    </location>
    <ligand>
        <name>GTP</name>
        <dbReference type="ChEBI" id="CHEBI:37565"/>
    </ligand>
</feature>
<feature type="binding site" evidence="2">
    <location>
        <position position="43"/>
    </location>
    <ligand>
        <name>GTP</name>
        <dbReference type="ChEBI" id="CHEBI:37565"/>
    </ligand>
</feature>
<feature type="binding site" evidence="2">
    <location>
        <position position="44"/>
    </location>
    <ligand>
        <name>GTP</name>
        <dbReference type="ChEBI" id="CHEBI:37565"/>
    </ligand>
</feature>
<feature type="binding site" evidence="2">
    <location>
        <position position="45"/>
    </location>
    <ligand>
        <name>GTP</name>
        <dbReference type="ChEBI" id="CHEBI:37565"/>
    </ligand>
</feature>
<feature type="binding site" evidence="2">
    <location>
        <position position="45"/>
    </location>
    <ligand>
        <name>Mg(2+)</name>
        <dbReference type="ChEBI" id="CHEBI:18420"/>
    </ligand>
</feature>
<feature type="binding site" evidence="2">
    <location>
        <position position="46"/>
    </location>
    <ligand>
        <name>GTP</name>
        <dbReference type="ChEBI" id="CHEBI:37565"/>
    </ligand>
</feature>
<feature type="binding site" evidence="2">
    <location>
        <position position="154"/>
    </location>
    <ligand>
        <name>GTP</name>
        <dbReference type="ChEBI" id="CHEBI:37565"/>
    </ligand>
</feature>
<feature type="binding site" evidence="2">
    <location>
        <position position="179"/>
    </location>
    <ligand>
        <name>GTP</name>
        <dbReference type="ChEBI" id="CHEBI:37565"/>
    </ligand>
</feature>
<feature type="binding site" evidence="2">
    <location>
        <position position="185"/>
    </location>
    <ligand>
        <name>GTP</name>
        <dbReference type="ChEBI" id="CHEBI:37565"/>
    </ligand>
</feature>
<feature type="binding site" evidence="2">
    <location>
        <position position="185"/>
    </location>
    <ligand>
        <name>Mg(2+)</name>
        <dbReference type="ChEBI" id="CHEBI:18420"/>
    </ligand>
</feature>
<feature type="binding site" evidence="2">
    <location>
        <position position="207"/>
    </location>
    <ligand>
        <name>GTP</name>
        <dbReference type="ChEBI" id="CHEBI:37565"/>
    </ligand>
</feature>
<feature type="binding site" evidence="2">
    <location>
        <position position="272"/>
    </location>
    <ligand>
        <name>GTP</name>
        <dbReference type="ChEBI" id="CHEBI:37565"/>
    </ligand>
</feature>
<feature type="binding site" evidence="2">
    <location>
        <position position="273"/>
    </location>
    <ligand>
        <name>GTP</name>
        <dbReference type="ChEBI" id="CHEBI:37565"/>
    </ligand>
</feature>
<feature type="binding site" evidence="2">
    <location>
        <position position="275"/>
    </location>
    <ligand>
        <name>GTP</name>
        <dbReference type="ChEBI" id="CHEBI:37565"/>
    </ligand>
</feature>
<feature type="binding site" evidence="2">
    <location>
        <position position="328"/>
    </location>
    <ligand>
        <name>GTP</name>
        <dbReference type="ChEBI" id="CHEBI:37565"/>
    </ligand>
</feature>
<feature type="modified residue" description="Phosphoserine" evidence="7">
    <location>
        <position position="113"/>
    </location>
</feature>
<feature type="lipid moiety-binding region" description="N-myristoyl glycine" evidence="4">
    <location>
        <position position="2"/>
    </location>
</feature>
<feature type="lipid moiety-binding region" description="S-palmitoyl cysteine" evidence="1">
    <location>
        <position position="4"/>
    </location>
</feature>
<reference key="1">
    <citation type="journal article" date="1989" name="Proc. Natl. Acad. Sci. U.S.A.">
        <title>Multiple alpha subunits of guanine nucleotide-binding proteins in Dictyostelium.</title>
        <authorList>
            <person name="Pupillo M."/>
            <person name="Kumagai A."/>
            <person name="Pitt G.S."/>
            <person name="Firtel R.A."/>
            <person name="Devreotes P.N."/>
        </authorList>
    </citation>
    <scope>NUCLEOTIDE SEQUENCE [MRNA]</scope>
</reference>
<reference key="2">
    <citation type="journal article" date="2002" name="Nature">
        <title>Sequence and analysis of chromosome 2 of Dictyostelium discoideum.</title>
        <authorList>
            <person name="Gloeckner G."/>
            <person name="Eichinger L."/>
            <person name="Szafranski K."/>
            <person name="Pachebat J.A."/>
            <person name="Bankier A.T."/>
            <person name="Dear P.H."/>
            <person name="Lehmann R."/>
            <person name="Baumgart C."/>
            <person name="Parra G."/>
            <person name="Abril J.F."/>
            <person name="Guigo R."/>
            <person name="Kumpf K."/>
            <person name="Tunggal B."/>
            <person name="Cox E.C."/>
            <person name="Quail M.A."/>
            <person name="Platzer M."/>
            <person name="Rosenthal A."/>
            <person name="Noegel A.A."/>
        </authorList>
    </citation>
    <scope>NUCLEOTIDE SEQUENCE [LARGE SCALE GENOMIC DNA]</scope>
    <source>
        <strain>AX4</strain>
    </source>
</reference>
<reference key="3">
    <citation type="journal article" date="2005" name="Nature">
        <title>The genome of the social amoeba Dictyostelium discoideum.</title>
        <authorList>
            <person name="Eichinger L."/>
            <person name="Pachebat J.A."/>
            <person name="Gloeckner G."/>
            <person name="Rajandream M.A."/>
            <person name="Sucgang R."/>
            <person name="Berriman M."/>
            <person name="Song J."/>
            <person name="Olsen R."/>
            <person name="Szafranski K."/>
            <person name="Xu Q."/>
            <person name="Tunggal B."/>
            <person name="Kummerfeld S."/>
            <person name="Madera M."/>
            <person name="Konfortov B.A."/>
            <person name="Rivero F."/>
            <person name="Bankier A.T."/>
            <person name="Lehmann R."/>
            <person name="Hamlin N."/>
            <person name="Davies R."/>
            <person name="Gaudet P."/>
            <person name="Fey P."/>
            <person name="Pilcher K."/>
            <person name="Chen G."/>
            <person name="Saunders D."/>
            <person name="Sodergren E.J."/>
            <person name="Davis P."/>
            <person name="Kerhornou A."/>
            <person name="Nie X."/>
            <person name="Hall N."/>
            <person name="Anjard C."/>
            <person name="Hemphill L."/>
            <person name="Bason N."/>
            <person name="Farbrother P."/>
            <person name="Desany B."/>
            <person name="Just E."/>
            <person name="Morio T."/>
            <person name="Rost R."/>
            <person name="Churcher C.M."/>
            <person name="Cooper J."/>
            <person name="Haydock S."/>
            <person name="van Driessche N."/>
            <person name="Cronin A."/>
            <person name="Goodhead I."/>
            <person name="Muzny D.M."/>
            <person name="Mourier T."/>
            <person name="Pain A."/>
            <person name="Lu M."/>
            <person name="Harper D."/>
            <person name="Lindsay R."/>
            <person name="Hauser H."/>
            <person name="James K.D."/>
            <person name="Quiles M."/>
            <person name="Madan Babu M."/>
            <person name="Saito T."/>
            <person name="Buchrieser C."/>
            <person name="Wardroper A."/>
            <person name="Felder M."/>
            <person name="Thangavelu M."/>
            <person name="Johnson D."/>
            <person name="Knights A."/>
            <person name="Loulseged H."/>
            <person name="Mungall K.L."/>
            <person name="Oliver K."/>
            <person name="Price C."/>
            <person name="Quail M.A."/>
            <person name="Urushihara H."/>
            <person name="Hernandez J."/>
            <person name="Rabbinowitsch E."/>
            <person name="Steffen D."/>
            <person name="Sanders M."/>
            <person name="Ma J."/>
            <person name="Kohara Y."/>
            <person name="Sharp S."/>
            <person name="Simmonds M.N."/>
            <person name="Spiegler S."/>
            <person name="Tivey A."/>
            <person name="Sugano S."/>
            <person name="White B."/>
            <person name="Walker D."/>
            <person name="Woodward J.R."/>
            <person name="Winckler T."/>
            <person name="Tanaka Y."/>
            <person name="Shaulsky G."/>
            <person name="Schleicher M."/>
            <person name="Weinstock G.M."/>
            <person name="Rosenthal A."/>
            <person name="Cox E.C."/>
            <person name="Chisholm R.L."/>
            <person name="Gibbs R.A."/>
            <person name="Loomis W.F."/>
            <person name="Platzer M."/>
            <person name="Kay R.R."/>
            <person name="Williams J.G."/>
            <person name="Dear P.H."/>
            <person name="Noegel A.A."/>
            <person name="Barrell B.G."/>
            <person name="Kuspa A."/>
        </authorList>
    </citation>
    <scope>NUCLEOTIDE SEQUENCE [LARGE SCALE GENOMIC DNA]</scope>
    <source>
        <strain>AX4</strain>
    </source>
</reference>
<reference key="4">
    <citation type="journal article" date="1989" name="Cell">
        <title>Regulation and function of G alpha protein subunits in Dictyostelium.</title>
        <authorList>
            <person name="Kumagai A."/>
            <person name="Pupillo M."/>
            <person name="Gundersen R."/>
            <person name="Miake-Lye R."/>
            <person name="Devreotes P.N."/>
            <person name="Firtel R.A."/>
        </authorList>
    </citation>
    <scope>NUCLEOTIDE SEQUENCE OF 4-33</scope>
    <scope>FUNCTION</scope>
    <scope>INDUCTION</scope>
</reference>
<reference key="5">
    <citation type="journal article" date="1994" name="J. Biol. Chem.">
        <title>Serine 113 is the site of receptor-mediated phosphorylation of the Dictyostelium G protein alpha-subunit G alpha 2.</title>
        <authorList>
            <person name="Chen M.Y."/>
            <person name="Devreotes P.N."/>
            <person name="Gundersen R.E."/>
        </authorList>
    </citation>
    <scope>PHOSPHORYLATION AT SER-113</scope>
</reference>
<reference key="6">
    <citation type="journal article" date="1999" name="J. Cell. Biochem.">
        <title>Aggregation of Dictyostelium discoideum is dependent on myristoylation and membrane localization of the G protein alpha-subunit, G alpha 2.</title>
        <authorList>
            <person name="Root P.A."/>
            <person name="Prince A."/>
            <person name="Gundersen R.E."/>
        </authorList>
    </citation>
    <scope>MYRISTOYLATION AT GLY-2</scope>
</reference>
<reference key="7">
    <citation type="journal article" date="2016" name="Dev. Cell">
        <title>A Galpha-Stimulated RapGEF Is a Receptor-Proximal Regulator of Dictyostelium Chemotaxis.</title>
        <authorList>
            <person name="Liu Y."/>
            <person name="Lacal J."/>
            <person name="Veltman D.M."/>
            <person name="Fusetti F."/>
            <person name="van Haastert P.J."/>
            <person name="Firtel R.A."/>
            <person name="Kortholt A."/>
        </authorList>
    </citation>
    <scope>INTERACTION WITH GFLB</scope>
    <scope>FUNCTION</scope>
</reference>
<protein>
    <recommendedName>
        <fullName>Guanine nucleotide-binding protein alpha-2 subunit</fullName>
        <shortName>G alpha-2</shortName>
    </recommendedName>
</protein>
<proteinExistence type="evidence at protein level"/>
<dbReference type="EMBL" id="M25061">
    <property type="protein sequence ID" value="AAA33208.1"/>
    <property type="molecule type" value="mRNA"/>
</dbReference>
<dbReference type="EMBL" id="AAFI02000014">
    <property type="protein sequence ID" value="EAL69280.1"/>
    <property type="molecule type" value="Genomic_DNA"/>
</dbReference>
<dbReference type="PIR" id="B32384">
    <property type="entry name" value="B32384"/>
</dbReference>
<dbReference type="PIR" id="B32945">
    <property type="entry name" value="B32945"/>
</dbReference>
<dbReference type="RefSeq" id="XP_643229.1">
    <property type="nucleotide sequence ID" value="XM_638137.1"/>
</dbReference>
<dbReference type="SMR" id="P16051"/>
<dbReference type="FunCoup" id="P16051">
    <property type="interactions" value="7"/>
</dbReference>
<dbReference type="STRING" id="44689.P16051"/>
<dbReference type="iPTMnet" id="P16051"/>
<dbReference type="SwissPalm" id="P16051"/>
<dbReference type="PaxDb" id="44689-DDB0191327"/>
<dbReference type="EnsemblProtists" id="EAL69280">
    <property type="protein sequence ID" value="EAL69280"/>
    <property type="gene ID" value="DDB_G0276267"/>
</dbReference>
<dbReference type="GeneID" id="8620433"/>
<dbReference type="KEGG" id="ddi:DDB_G0276267"/>
<dbReference type="dictyBase" id="DDB_G0276267">
    <property type="gene designation" value="gpaB"/>
</dbReference>
<dbReference type="VEuPathDB" id="AmoebaDB:DDB_G0276267"/>
<dbReference type="eggNOG" id="KOG0082">
    <property type="taxonomic scope" value="Eukaryota"/>
</dbReference>
<dbReference type="HOGENOM" id="CLU_014184_6_0_1"/>
<dbReference type="InParanoid" id="P16051"/>
<dbReference type="OMA" id="ICKPDYM"/>
<dbReference type="PhylomeDB" id="P16051"/>
<dbReference type="Reactome" id="R-DDI-112043">
    <property type="pathway name" value="PLC beta mediated events"/>
</dbReference>
<dbReference type="Reactome" id="R-DDI-170660">
    <property type="pathway name" value="Adenylate cyclase activating pathway"/>
</dbReference>
<dbReference type="Reactome" id="R-DDI-170670">
    <property type="pathway name" value="Adenylate cyclase inhibitory pathway"/>
</dbReference>
<dbReference type="Reactome" id="R-DDI-202040">
    <property type="pathway name" value="G-protein activation"/>
</dbReference>
<dbReference type="Reactome" id="R-DDI-399997">
    <property type="pathway name" value="Acetylcholine regulates insulin secretion"/>
</dbReference>
<dbReference type="Reactome" id="R-DDI-416476">
    <property type="pathway name" value="G alpha (q) signalling events"/>
</dbReference>
<dbReference type="Reactome" id="R-DDI-416482">
    <property type="pathway name" value="G alpha (12/13) signalling events"/>
</dbReference>
<dbReference type="Reactome" id="R-DDI-418592">
    <property type="pathway name" value="ADP signalling through P2Y purinoceptor 1"/>
</dbReference>
<dbReference type="Reactome" id="R-DDI-434316">
    <property type="pathway name" value="Fatty Acids bound to GPR40 (FFAR1) regulate insulin secretion"/>
</dbReference>
<dbReference type="Reactome" id="R-DDI-9013148">
    <property type="pathway name" value="CDC42 GTPase cycle"/>
</dbReference>
<dbReference type="Reactome" id="R-DDI-9013149">
    <property type="pathway name" value="RAC1 GTPase cycle"/>
</dbReference>
<dbReference type="Reactome" id="R-DDI-9856530">
    <property type="pathway name" value="High laminar flow shear stress activates signaling by PIEZO1 and PECAM1:CDH5:KDR in endothelial cells"/>
</dbReference>
<dbReference type="PRO" id="PR:P16051"/>
<dbReference type="Proteomes" id="UP000002195">
    <property type="component" value="Chromosome 2"/>
</dbReference>
<dbReference type="GO" id="GO:0005737">
    <property type="term" value="C:cytoplasm"/>
    <property type="evidence" value="ECO:0000318"/>
    <property type="project" value="GO_Central"/>
</dbReference>
<dbReference type="GO" id="GO:0005829">
    <property type="term" value="C:cytosol"/>
    <property type="evidence" value="ECO:0000314"/>
    <property type="project" value="dictyBase"/>
</dbReference>
<dbReference type="GO" id="GO:0005834">
    <property type="term" value="C:heterotrimeric G-protein complex"/>
    <property type="evidence" value="ECO:0000314"/>
    <property type="project" value="dictyBase"/>
</dbReference>
<dbReference type="GO" id="GO:0005886">
    <property type="term" value="C:plasma membrane"/>
    <property type="evidence" value="ECO:0000314"/>
    <property type="project" value="dictyBase"/>
</dbReference>
<dbReference type="GO" id="GO:0003925">
    <property type="term" value="F:G protein activity"/>
    <property type="evidence" value="ECO:0000315"/>
    <property type="project" value="dictyBase"/>
</dbReference>
<dbReference type="GO" id="GO:0001664">
    <property type="term" value="F:G protein-coupled receptor binding"/>
    <property type="evidence" value="ECO:0000314"/>
    <property type="project" value="dictyBase"/>
</dbReference>
<dbReference type="GO" id="GO:0031681">
    <property type="term" value="F:G-protein beta-subunit binding"/>
    <property type="evidence" value="ECO:0000314"/>
    <property type="project" value="dictyBase"/>
</dbReference>
<dbReference type="GO" id="GO:0031683">
    <property type="term" value="F:G-protein beta/gamma-subunit complex binding"/>
    <property type="evidence" value="ECO:0000318"/>
    <property type="project" value="GO_Central"/>
</dbReference>
<dbReference type="GO" id="GO:0005525">
    <property type="term" value="F:GTP binding"/>
    <property type="evidence" value="ECO:0000305"/>
    <property type="project" value="dictyBase"/>
</dbReference>
<dbReference type="GO" id="GO:0003924">
    <property type="term" value="F:GTPase activity"/>
    <property type="evidence" value="ECO:0000318"/>
    <property type="project" value="GO_Central"/>
</dbReference>
<dbReference type="GO" id="GO:0030695">
    <property type="term" value="F:GTPase regulator activity"/>
    <property type="evidence" value="ECO:0000314"/>
    <property type="project" value="dictyBase"/>
</dbReference>
<dbReference type="GO" id="GO:0005091">
    <property type="term" value="F:guanyl-nucleotide exchange factor adaptor activity"/>
    <property type="evidence" value="ECO:0000314"/>
    <property type="project" value="dictyBase"/>
</dbReference>
<dbReference type="GO" id="GO:0046872">
    <property type="term" value="F:metal ion binding"/>
    <property type="evidence" value="ECO:0007669"/>
    <property type="project" value="UniProtKB-KW"/>
</dbReference>
<dbReference type="GO" id="GO:0030041">
    <property type="term" value="P:actin filament polymerization"/>
    <property type="evidence" value="ECO:0000315"/>
    <property type="project" value="dictyBase"/>
</dbReference>
<dbReference type="GO" id="GO:0007189">
    <property type="term" value="P:adenylate cyclase-activating G protein-coupled receptor signaling pathway"/>
    <property type="evidence" value="ECO:0000315"/>
    <property type="project" value="dictyBase"/>
</dbReference>
<dbReference type="GO" id="GO:0007188">
    <property type="term" value="P:adenylate cyclase-modulating G protein-coupled receptor signaling pathway"/>
    <property type="evidence" value="ECO:0000314"/>
    <property type="project" value="dictyBase"/>
</dbReference>
<dbReference type="GO" id="GO:0031152">
    <property type="term" value="P:aggregation involved in sorocarp development"/>
    <property type="evidence" value="ECO:0000315"/>
    <property type="project" value="dictyBase"/>
</dbReference>
<dbReference type="GO" id="GO:0006935">
    <property type="term" value="P:chemotaxis"/>
    <property type="evidence" value="ECO:0000315"/>
    <property type="project" value="dictyBase"/>
</dbReference>
<dbReference type="GO" id="GO:0006909">
    <property type="term" value="P:phagocytosis"/>
    <property type="evidence" value="ECO:0000315"/>
    <property type="project" value="dictyBase"/>
</dbReference>
<dbReference type="GO" id="GO:0006355">
    <property type="term" value="P:regulation of DNA-templated transcription"/>
    <property type="evidence" value="ECO:0000315"/>
    <property type="project" value="dictyBase"/>
</dbReference>
<dbReference type="GO" id="GO:0046825">
    <property type="term" value="P:regulation of protein export from nucleus"/>
    <property type="evidence" value="ECO:0000315"/>
    <property type="project" value="dictyBase"/>
</dbReference>
<dbReference type="GO" id="GO:0009617">
    <property type="term" value="P:response to bacterium"/>
    <property type="evidence" value="ECO:0000314"/>
    <property type="project" value="dictyBase"/>
</dbReference>
<dbReference type="GO" id="GO:0007264">
    <property type="term" value="P:small GTPase-mediated signal transduction"/>
    <property type="evidence" value="ECO:0000315"/>
    <property type="project" value="dictyBase"/>
</dbReference>
<dbReference type="CDD" id="cd00066">
    <property type="entry name" value="G-alpha"/>
    <property type="match status" value="1"/>
</dbReference>
<dbReference type="FunFam" id="3.40.50.300:FF:002307">
    <property type="entry name" value="Guanine nucleotide-binding protein G(k) subunit alpha"/>
    <property type="match status" value="1"/>
</dbReference>
<dbReference type="FunFam" id="3.40.50.300:FF:000692">
    <property type="entry name" value="Guanine nucleotide-binding protein subunit alpha"/>
    <property type="match status" value="1"/>
</dbReference>
<dbReference type="Gene3D" id="1.10.400.10">
    <property type="entry name" value="GI Alpha 1, domain 2-like"/>
    <property type="match status" value="1"/>
</dbReference>
<dbReference type="Gene3D" id="3.40.50.300">
    <property type="entry name" value="P-loop containing nucleotide triphosphate hydrolases"/>
    <property type="match status" value="1"/>
</dbReference>
<dbReference type="InterPro" id="IPR002975">
    <property type="entry name" value="Fungi_Gprotein_alpha"/>
</dbReference>
<dbReference type="InterPro" id="IPR001019">
    <property type="entry name" value="Gprotein_alpha_su"/>
</dbReference>
<dbReference type="InterPro" id="IPR011025">
    <property type="entry name" value="GproteinA_insert"/>
</dbReference>
<dbReference type="InterPro" id="IPR027417">
    <property type="entry name" value="P-loop_NTPase"/>
</dbReference>
<dbReference type="PANTHER" id="PTHR10218">
    <property type="entry name" value="GTP-BINDING PROTEIN ALPHA SUBUNIT"/>
    <property type="match status" value="1"/>
</dbReference>
<dbReference type="PANTHER" id="PTHR10218:SF351">
    <property type="entry name" value="GUANINE NUCLEOTIDE-BINDING PROTEIN ALPHA-2 SUBUNIT"/>
    <property type="match status" value="1"/>
</dbReference>
<dbReference type="Pfam" id="PF00503">
    <property type="entry name" value="G-alpha"/>
    <property type="match status" value="1"/>
</dbReference>
<dbReference type="PRINTS" id="PR00318">
    <property type="entry name" value="GPROTEINA"/>
</dbReference>
<dbReference type="PRINTS" id="PR01241">
    <property type="entry name" value="GPROTEINAFNG"/>
</dbReference>
<dbReference type="SMART" id="SM00275">
    <property type="entry name" value="G_alpha"/>
    <property type="match status" value="1"/>
</dbReference>
<dbReference type="SUPFAM" id="SSF52540">
    <property type="entry name" value="P-loop containing nucleoside triphosphate hydrolases"/>
    <property type="match status" value="1"/>
</dbReference>
<dbReference type="SUPFAM" id="SSF47895">
    <property type="entry name" value="Transducin (alpha subunit), insertion domain"/>
    <property type="match status" value="1"/>
</dbReference>
<dbReference type="PROSITE" id="PS51882">
    <property type="entry name" value="G_ALPHA"/>
    <property type="match status" value="1"/>
</dbReference>
<organism>
    <name type="scientific">Dictyostelium discoideum</name>
    <name type="common">Social amoeba</name>
    <dbReference type="NCBI Taxonomy" id="44689"/>
    <lineage>
        <taxon>Eukaryota</taxon>
        <taxon>Amoebozoa</taxon>
        <taxon>Evosea</taxon>
        <taxon>Eumycetozoa</taxon>
        <taxon>Dictyostelia</taxon>
        <taxon>Dictyosteliales</taxon>
        <taxon>Dictyosteliaceae</taxon>
        <taxon>Dictyostelium</taxon>
    </lineage>
</organism>
<name>GPA2_DICDI</name>
<sequence>MGICASSMEGEKTNTDINLSIEKERKKKHNEVKLLLLGAGESGKSTISKQMKIIHQSGYSNEERKEFKPIITRNILDNMRVLLDGMGRLGMTIDPSNSDAAVMIKELTSLQASIVTDCWGELNEDQGKKIKALWTDPGVKQAMRRANEFSTLPDSAPYFFDSIDRMTSPVYIPTDQDILHTRVMTRGVHETNFEIGKIKFRLVDVGGQRSERKKWLSCFDDVTAVVFCVALSEYDLLLYEDNSTNRMLESLRVFSDVCNSWFVNTPIILFLNKSDLFREKIKHVDLSETFPEYKGGRDYERASNYIKERFWQINKTEQKAIYSHITCATDTNNIRVVFEAVKDIIFTQCVMKAGLYS</sequence>
<comment type="function">
    <text evidence="5 6">Guanine nucleotide-binding proteins (G proteins) are involved as modulators or transducers in various transmembrane signaling systems. G alpha-2 is required for the early aggregation process and most of the known cAMP receptor-mediated responses (PubMed:2539262). Interacts with downstream effector gflB, a Rap guanine nucleotide exchange factor, to regulate the balance between Ras and Rap signaling at the leading edge of chemotaxing cells (PubMed:27237792).</text>
</comment>
<comment type="cofactor">
    <cofactor evidence="2">
        <name>Mg(2+)</name>
        <dbReference type="ChEBI" id="CHEBI:18420"/>
    </cofactor>
</comment>
<comment type="subunit">
    <text evidence="6 8">G proteins are composed of 3 units; alpha, beta and gamma. The alpha chain contains the guanine nucleotide binding site (Probable). Interacts with the RAP guanine nucleotide exchange factor glfB (PubMed:27237792).</text>
</comment>
<comment type="induction">
    <text evidence="5">Expression is induced by cAMP pulses and during aggregation.</text>
</comment>
<comment type="PTM">
    <text evidence="7">Ser-113 is transiently phosphorylated following stimulation with extracellular cAMP.</text>
</comment>
<comment type="similarity">
    <text evidence="8">Belongs to the G-alpha family.</text>
</comment>
<keyword id="KW-0342">GTP-binding</keyword>
<keyword id="KW-0378">Hydrolase</keyword>
<keyword id="KW-0449">Lipoprotein</keyword>
<keyword id="KW-0460">Magnesium</keyword>
<keyword id="KW-0479">Metal-binding</keyword>
<keyword id="KW-0519">Myristate</keyword>
<keyword id="KW-0547">Nucleotide-binding</keyword>
<keyword id="KW-0564">Palmitate</keyword>
<keyword id="KW-0597">Phosphoprotein</keyword>
<keyword id="KW-1185">Reference proteome</keyword>
<keyword id="KW-0807">Transducer</keyword>